<sequence>MDMRSHEMIERRREDNGNNNGGVVISNIISTNIDDNCNGNNNNTRVSCNSQTLDHHQSKSPSSFSISAAAKPTVRYRECLKNHAASVGGSVHDGCGEFMPSGEEGTIEALRCAACDCHRNFHRKEMDGVGSSDLISHHRHHHYHHNQYGGGGGRRPPPPNMMLNPLMLPPPPNYQPIHHHKYGMSPPGGGGMVTPMSVAYGGGGGGAESSSEDLNLYGQSSGEGAGAAAGQMAFSMSSSKKRFRTKFTTDQKERMMDFAEKLGWRMNKQDEEELKRFCGEIGVKRQVFKVWMHNNKNNAKKPPTPTTTL</sequence>
<comment type="function">
    <text evidence="3 4 5">Putative transcription factor. Binds DNA at 5'-ATTA-3' consensus promoter regions. Regulates floral architecture and leaf development. Regulators in the abscisic acid (ABA) signal pathway that confers sensitivity to ABA in an ARF2-dependent manner.</text>
</comment>
<comment type="subunit">
    <text evidence="3 4">Homo- and heterodimer with other ZFHD proteins. Interacts with MIF1, MIF2 and MIF3; these interactions prevent nuclear localization and DNA-binding to inhibit transcription regulation activity. Binds to ZHD1, ZHD2, ZHD4, ZHD10 and ZHD11.</text>
</comment>
<comment type="interaction">
    <interactant intactId="EBI-1806169">
        <id>Q9FRL5</id>
    </interactant>
    <interactant intactId="EBI-1806298">
        <id>Q9FIW9</id>
        <label>ZHD10</label>
    </interactant>
    <organismsDiffer>false</organismsDiffer>
    <experiments>4</experiments>
</comment>
<comment type="interaction">
    <interactant intactId="EBI-1806169">
        <id>Q9FRL5</id>
    </interactant>
    <interactant intactId="EBI-1806244">
        <id>O64722</id>
        <label>ZHD3</label>
    </interactant>
    <organismsDiffer>false</organismsDiffer>
    <experiments>4</experiments>
</comment>
<comment type="interaction">
    <interactant intactId="EBI-1806169">
        <id>Q9FRL5</id>
    </interactant>
    <interactant intactId="EBI-1806382">
        <id>Q9SVL0</id>
        <label>ZHD7</label>
    </interactant>
    <organismsDiffer>false</organismsDiffer>
    <experiments>3</experiments>
</comment>
<comment type="interaction">
    <interactant intactId="EBI-1806169">
        <id>Q9FRL5</id>
    </interactant>
    <interactant intactId="EBI-1806440">
        <id>Q9LHF0</id>
        <label>ZHD9</label>
    </interactant>
    <organismsDiffer>false</organismsDiffer>
    <experiments>3</experiments>
</comment>
<comment type="subcellular location">
    <subcellularLocation>
        <location evidence="4">Nucleus</location>
    </subcellularLocation>
    <text>Interactions with MIF proteins prevent nuclear subcellular location and leads to a scattered repartition throughout the cytoplasm.</text>
</comment>
<comment type="tissue specificity">
    <text evidence="3">Mostly expressed in flowers and inflorescence.</text>
</comment>
<comment type="induction">
    <text evidence="5">Repressed by abscisic acid (ABA) and ARF2.</text>
</comment>
<comment type="domain">
    <text>The homeodomain differs form the typical one by having namely 4 instead of 3 extra amino acids inserted in the loop between helix 1 and helix 2.</text>
</comment>
<comment type="disruption phenotype">
    <text evidence="5">Increased resistance to abscisic acid (ABA) in the seed germination and primary root growth.</text>
</comment>
<keyword id="KW-0938">Abscisic acid signaling pathway</keyword>
<keyword id="KW-0238">DNA-binding</keyword>
<keyword id="KW-0371">Homeobox</keyword>
<keyword id="KW-0479">Metal-binding</keyword>
<keyword id="KW-0539">Nucleus</keyword>
<keyword id="KW-1185">Reference proteome</keyword>
<keyword id="KW-0804">Transcription</keyword>
<keyword id="KW-0805">Transcription regulation</keyword>
<keyword id="KW-0862">Zinc</keyword>
<keyword id="KW-0863">Zinc-finger</keyword>
<accession>Q9FRL5</accession>
<name>ZHD5_ARATH</name>
<proteinExistence type="evidence at protein level"/>
<reference key="1">
    <citation type="journal article" date="2000" name="Nature">
        <title>Sequence and analysis of chromosome 1 of the plant Arabidopsis thaliana.</title>
        <authorList>
            <person name="Theologis A."/>
            <person name="Ecker J.R."/>
            <person name="Palm C.J."/>
            <person name="Federspiel N.A."/>
            <person name="Kaul S."/>
            <person name="White O."/>
            <person name="Alonso J."/>
            <person name="Altafi H."/>
            <person name="Araujo R."/>
            <person name="Bowman C.L."/>
            <person name="Brooks S.Y."/>
            <person name="Buehler E."/>
            <person name="Chan A."/>
            <person name="Chao Q."/>
            <person name="Chen H."/>
            <person name="Cheuk R.F."/>
            <person name="Chin C.W."/>
            <person name="Chung M.K."/>
            <person name="Conn L."/>
            <person name="Conway A.B."/>
            <person name="Conway A.R."/>
            <person name="Creasy T.H."/>
            <person name="Dewar K."/>
            <person name="Dunn P."/>
            <person name="Etgu P."/>
            <person name="Feldblyum T.V."/>
            <person name="Feng J.-D."/>
            <person name="Fong B."/>
            <person name="Fujii C.Y."/>
            <person name="Gill J.E."/>
            <person name="Goldsmith A.D."/>
            <person name="Haas B."/>
            <person name="Hansen N.F."/>
            <person name="Hughes B."/>
            <person name="Huizar L."/>
            <person name="Hunter J.L."/>
            <person name="Jenkins J."/>
            <person name="Johnson-Hopson C."/>
            <person name="Khan S."/>
            <person name="Khaykin E."/>
            <person name="Kim C.J."/>
            <person name="Koo H.L."/>
            <person name="Kremenetskaia I."/>
            <person name="Kurtz D.B."/>
            <person name="Kwan A."/>
            <person name="Lam B."/>
            <person name="Langin-Hooper S."/>
            <person name="Lee A."/>
            <person name="Lee J.M."/>
            <person name="Lenz C.A."/>
            <person name="Li J.H."/>
            <person name="Li Y.-P."/>
            <person name="Lin X."/>
            <person name="Liu S.X."/>
            <person name="Liu Z.A."/>
            <person name="Luros J.S."/>
            <person name="Maiti R."/>
            <person name="Marziali A."/>
            <person name="Militscher J."/>
            <person name="Miranda M."/>
            <person name="Nguyen M."/>
            <person name="Nierman W.C."/>
            <person name="Osborne B.I."/>
            <person name="Pai G."/>
            <person name="Peterson J."/>
            <person name="Pham P.K."/>
            <person name="Rizzo M."/>
            <person name="Rooney T."/>
            <person name="Rowley D."/>
            <person name="Sakano H."/>
            <person name="Salzberg S.L."/>
            <person name="Schwartz J.R."/>
            <person name="Shinn P."/>
            <person name="Southwick A.M."/>
            <person name="Sun H."/>
            <person name="Tallon L.J."/>
            <person name="Tambunga G."/>
            <person name="Toriumi M.J."/>
            <person name="Town C.D."/>
            <person name="Utterback T."/>
            <person name="Van Aken S."/>
            <person name="Vaysberg M."/>
            <person name="Vysotskaia V.S."/>
            <person name="Walker M."/>
            <person name="Wu D."/>
            <person name="Yu G."/>
            <person name="Fraser C.M."/>
            <person name="Venter J.C."/>
            <person name="Davis R.W."/>
        </authorList>
    </citation>
    <scope>NUCLEOTIDE SEQUENCE [LARGE SCALE GENOMIC DNA]</scope>
    <source>
        <strain>cv. Columbia</strain>
    </source>
</reference>
<reference key="2">
    <citation type="journal article" date="2017" name="Plant J.">
        <title>Araport11: a complete reannotation of the Arabidopsis thaliana reference genome.</title>
        <authorList>
            <person name="Cheng C.Y."/>
            <person name="Krishnakumar V."/>
            <person name="Chan A.P."/>
            <person name="Thibaud-Nissen F."/>
            <person name="Schobel S."/>
            <person name="Town C.D."/>
        </authorList>
    </citation>
    <scope>GENOME REANNOTATION</scope>
    <source>
        <strain>cv. Columbia</strain>
    </source>
</reference>
<reference key="3">
    <citation type="submission" date="2006-07" db="EMBL/GenBank/DDBJ databases">
        <title>Large-scale analysis of RIKEN Arabidopsis full-length (RAFL) cDNAs.</title>
        <authorList>
            <person name="Totoki Y."/>
            <person name="Seki M."/>
            <person name="Ishida J."/>
            <person name="Nakajima M."/>
            <person name="Enju A."/>
            <person name="Kamiya A."/>
            <person name="Narusaka M."/>
            <person name="Shin-i T."/>
            <person name="Nakagawa M."/>
            <person name="Sakamoto N."/>
            <person name="Oishi K."/>
            <person name="Kohara Y."/>
            <person name="Kobayashi M."/>
            <person name="Toyoda A."/>
            <person name="Sakaki Y."/>
            <person name="Sakurai T."/>
            <person name="Iida K."/>
            <person name="Akiyama K."/>
            <person name="Satou M."/>
            <person name="Toyoda T."/>
            <person name="Konagaya A."/>
            <person name="Carninci P."/>
            <person name="Kawai J."/>
            <person name="Hayashizaki Y."/>
            <person name="Shinozaki K."/>
        </authorList>
    </citation>
    <scope>NUCLEOTIDE SEQUENCE [LARGE SCALE MRNA]</scope>
    <source>
        <strain>cv. Columbia</strain>
    </source>
</reference>
<reference key="4">
    <citation type="submission" date="2006-09" db="EMBL/GenBank/DDBJ databases">
        <title>Arabidopsis ORF Clones.</title>
        <authorList>
            <person name="Bautista V.R."/>
            <person name="Kim C.J."/>
            <person name="Chen H."/>
            <person name="Quinitio C."/>
            <person name="Ecker J.R."/>
        </authorList>
    </citation>
    <scope>NUCLEOTIDE SEQUENCE [LARGE SCALE MRNA]</scope>
    <source>
        <strain>cv. Columbia</strain>
    </source>
</reference>
<reference key="5">
    <citation type="submission" date="2002-03" db="EMBL/GenBank/DDBJ databases">
        <title>Full-length cDNA from Arabidopsis thaliana.</title>
        <authorList>
            <person name="Brover V.V."/>
            <person name="Troukhan M.E."/>
            <person name="Alexandrov N.A."/>
            <person name="Lu Y.-P."/>
            <person name="Flavell R.B."/>
            <person name="Feldmann K.A."/>
        </authorList>
    </citation>
    <scope>NUCLEOTIDE SEQUENCE [LARGE SCALE MRNA]</scope>
</reference>
<reference key="6">
    <citation type="journal article" date="2006" name="Plant Physiol.">
        <title>The Arabidopsis zinc finger-homeodomain genes encode proteins with unique biochemical properties that are coordinately expressed during floral development.</title>
        <authorList>
            <person name="Tan Q.K."/>
            <person name="Irish V.F."/>
        </authorList>
    </citation>
    <scope>FUNCTION</scope>
    <scope>INTERACTION WITH ZHD1; ZHD2; ZHD4; ZHD10 AND ZHD11</scope>
    <scope>TISSUE SPECIFICITY</scope>
    <scope>MUTAGENESIS OF MET-292</scope>
    <scope>GENE FAMILY</scope>
</reference>
<reference key="7">
    <citation type="journal article" date="2008" name="J. Integr. Plant Biol.">
        <title>Phylogenetic analysis of the plant-specific zinc finger-homeobox and mini zinc finger gene families.</title>
        <authorList>
            <person name="Hu W."/>
            <person name="dePamphilis C.W."/>
            <person name="Ma H."/>
        </authorList>
    </citation>
    <scope>GENE FAMILY</scope>
    <scope>NOMENCLATURE</scope>
</reference>
<reference key="8">
    <citation type="journal article" date="2011" name="J. Biol. Chem.">
        <title>Nuclear import and DNA binding of the ZHD5 transcription factor is modulated by a competitive peptide inhibitor in Arabidopsis.</title>
        <authorList>
            <person name="Hong S.-Y."/>
            <person name="Kim O.-K."/>
            <person name="Kim S.-G."/>
            <person name="Yang M.-S."/>
            <person name="Park C.-M."/>
        </authorList>
    </citation>
    <scope>FUNCTION</scope>
    <scope>DNA-BINDING</scope>
    <scope>SUBCELLULAR LOCATION</scope>
    <scope>HOMODIMER</scope>
    <scope>INTERACTION WITH MIF1; MIF2 AND MIF3</scope>
    <scope>GENE FAMILY</scope>
    <scope>NOMENCLATURE</scope>
    <source>
        <strain>cv. Columbia</strain>
    </source>
</reference>
<reference key="9">
    <citation type="journal article" date="2011" name="PLoS Genet.">
        <title>Auxin Response Factor2 (ARF2) and its regulated homeodomain gene HB33 mediate abscisic acid response in Arabidopsis.</title>
        <authorList>
            <person name="Wang L."/>
            <person name="Hua D."/>
            <person name="He J."/>
            <person name="Duan Y."/>
            <person name="Chen Z."/>
            <person name="Hong X."/>
            <person name="Gong Z."/>
        </authorList>
    </citation>
    <scope>FUNCTION</scope>
    <scope>DISRUPTION PHENOTYPE</scope>
    <scope>INDUCTION BY ABSCISIC ACID AND ARF2</scope>
</reference>
<evidence type="ECO:0000255" key="1">
    <source>
        <dbReference type="PROSITE-ProRule" id="PRU00856"/>
    </source>
</evidence>
<evidence type="ECO:0000256" key="2">
    <source>
        <dbReference type="SAM" id="MobiDB-lite"/>
    </source>
</evidence>
<evidence type="ECO:0000269" key="3">
    <source>
    </source>
</evidence>
<evidence type="ECO:0000269" key="4">
    <source>
    </source>
</evidence>
<evidence type="ECO:0000269" key="5">
    <source>
    </source>
</evidence>
<organism>
    <name type="scientific">Arabidopsis thaliana</name>
    <name type="common">Mouse-ear cress</name>
    <dbReference type="NCBI Taxonomy" id="3702"/>
    <lineage>
        <taxon>Eukaryota</taxon>
        <taxon>Viridiplantae</taxon>
        <taxon>Streptophyta</taxon>
        <taxon>Embryophyta</taxon>
        <taxon>Tracheophyta</taxon>
        <taxon>Spermatophyta</taxon>
        <taxon>Magnoliopsida</taxon>
        <taxon>eudicotyledons</taxon>
        <taxon>Gunneridae</taxon>
        <taxon>Pentapetalae</taxon>
        <taxon>rosids</taxon>
        <taxon>malvids</taxon>
        <taxon>Brassicales</taxon>
        <taxon>Brassicaceae</taxon>
        <taxon>Camelineae</taxon>
        <taxon>Arabidopsis</taxon>
    </lineage>
</organism>
<gene>
    <name type="primary">ZHD5</name>
    <name type="synonym">HB33</name>
    <name type="ordered locus">At1g75240</name>
    <name type="ORF">F22H5.4</name>
</gene>
<dbReference type="EMBL" id="AC025814">
    <property type="protein sequence ID" value="AAG12686.1"/>
    <property type="molecule type" value="Genomic_DNA"/>
</dbReference>
<dbReference type="EMBL" id="CP002684">
    <property type="protein sequence ID" value="AEE35692.1"/>
    <property type="molecule type" value="Genomic_DNA"/>
</dbReference>
<dbReference type="EMBL" id="AK229038">
    <property type="protein sequence ID" value="BAF00922.1"/>
    <property type="molecule type" value="mRNA"/>
</dbReference>
<dbReference type="EMBL" id="BT028894">
    <property type="protein sequence ID" value="ABI49441.1"/>
    <property type="molecule type" value="mRNA"/>
</dbReference>
<dbReference type="EMBL" id="AY084462">
    <property type="protein sequence ID" value="AAM61034.1"/>
    <property type="molecule type" value="mRNA"/>
</dbReference>
<dbReference type="PIR" id="G96782">
    <property type="entry name" value="G96782"/>
</dbReference>
<dbReference type="RefSeq" id="NP_565106.1">
    <property type="nucleotide sequence ID" value="NM_106180.4"/>
</dbReference>
<dbReference type="SMR" id="Q9FRL5"/>
<dbReference type="BioGRID" id="29080">
    <property type="interactions" value="11"/>
</dbReference>
<dbReference type="FunCoup" id="Q9FRL5">
    <property type="interactions" value="6"/>
</dbReference>
<dbReference type="IntAct" id="Q9FRL5">
    <property type="interactions" value="10"/>
</dbReference>
<dbReference type="STRING" id="3702.Q9FRL5"/>
<dbReference type="GlyGen" id="Q9FRL5">
    <property type="glycosylation" value="2 sites, 1 O-linked glycan (2 sites)"/>
</dbReference>
<dbReference type="iPTMnet" id="Q9FRL5"/>
<dbReference type="PaxDb" id="3702-AT1G75240.1"/>
<dbReference type="ProteomicsDB" id="242976"/>
<dbReference type="EnsemblPlants" id="AT1G75240.1">
    <property type="protein sequence ID" value="AT1G75240.1"/>
    <property type="gene ID" value="AT1G75240"/>
</dbReference>
<dbReference type="GeneID" id="843861"/>
<dbReference type="Gramene" id="AT1G75240.1">
    <property type="protein sequence ID" value="AT1G75240.1"/>
    <property type="gene ID" value="AT1G75240"/>
</dbReference>
<dbReference type="KEGG" id="ath:AT1G75240"/>
<dbReference type="Araport" id="AT1G75240"/>
<dbReference type="TAIR" id="AT1G75240">
    <property type="gene designation" value="HB33"/>
</dbReference>
<dbReference type="eggNOG" id="ENOG502QZSB">
    <property type="taxonomic scope" value="Eukaryota"/>
</dbReference>
<dbReference type="HOGENOM" id="CLU_039237_2_0_1"/>
<dbReference type="InParanoid" id="Q9FRL5"/>
<dbReference type="OMA" id="NTRVSCN"/>
<dbReference type="OrthoDB" id="1910053at2759"/>
<dbReference type="PhylomeDB" id="Q9FRL5"/>
<dbReference type="PRO" id="PR:Q9FRL5"/>
<dbReference type="Proteomes" id="UP000006548">
    <property type="component" value="Chromosome 1"/>
</dbReference>
<dbReference type="ExpressionAtlas" id="Q9FRL5">
    <property type="expression patterns" value="baseline and differential"/>
</dbReference>
<dbReference type="GO" id="GO:0005634">
    <property type="term" value="C:nucleus"/>
    <property type="evidence" value="ECO:0000314"/>
    <property type="project" value="TAIR"/>
</dbReference>
<dbReference type="GO" id="GO:0003700">
    <property type="term" value="F:DNA-binding transcription factor activity"/>
    <property type="evidence" value="ECO:0000314"/>
    <property type="project" value="TAIR"/>
</dbReference>
<dbReference type="GO" id="GO:0042803">
    <property type="term" value="F:protein homodimerization activity"/>
    <property type="evidence" value="ECO:0000314"/>
    <property type="project" value="UniProtKB"/>
</dbReference>
<dbReference type="GO" id="GO:0043565">
    <property type="term" value="F:sequence-specific DNA binding"/>
    <property type="evidence" value="ECO:0000314"/>
    <property type="project" value="TAIR"/>
</dbReference>
<dbReference type="GO" id="GO:0000976">
    <property type="term" value="F:transcription cis-regulatory region binding"/>
    <property type="evidence" value="ECO:0000353"/>
    <property type="project" value="TAIR"/>
</dbReference>
<dbReference type="GO" id="GO:0008270">
    <property type="term" value="F:zinc ion binding"/>
    <property type="evidence" value="ECO:0007669"/>
    <property type="project" value="UniProtKB-KW"/>
</dbReference>
<dbReference type="GO" id="GO:0009738">
    <property type="term" value="P:abscisic acid-activated signaling pathway"/>
    <property type="evidence" value="ECO:0007669"/>
    <property type="project" value="UniProtKB-KW"/>
</dbReference>
<dbReference type="GO" id="GO:0045893">
    <property type="term" value="P:positive regulation of DNA-templated transcription"/>
    <property type="evidence" value="ECO:0000314"/>
    <property type="project" value="TAIR"/>
</dbReference>
<dbReference type="GO" id="GO:0009737">
    <property type="term" value="P:response to abscisic acid"/>
    <property type="evidence" value="ECO:0000315"/>
    <property type="project" value="TAIR"/>
</dbReference>
<dbReference type="FunFam" id="1.10.10.60:FF:000257">
    <property type="entry name" value="Zinc-finger homeodomain protein 2"/>
    <property type="match status" value="1"/>
</dbReference>
<dbReference type="Gene3D" id="1.10.10.60">
    <property type="entry name" value="Homeodomain-like"/>
    <property type="match status" value="1"/>
</dbReference>
<dbReference type="InterPro" id="IPR009057">
    <property type="entry name" value="Homeodomain-like_sf"/>
</dbReference>
<dbReference type="InterPro" id="IPR006455">
    <property type="entry name" value="Homeodomain_ZF_HD"/>
</dbReference>
<dbReference type="InterPro" id="IPR006456">
    <property type="entry name" value="ZF_HD_homeobox_Cys/His_dimer"/>
</dbReference>
<dbReference type="NCBIfam" id="TIGR01565">
    <property type="entry name" value="homeo_ZF_HD"/>
    <property type="match status" value="1"/>
</dbReference>
<dbReference type="NCBIfam" id="TIGR01566">
    <property type="entry name" value="ZF_HD_prot_N"/>
    <property type="match status" value="1"/>
</dbReference>
<dbReference type="PANTHER" id="PTHR31948">
    <property type="entry name" value="ZINC-FINGER HOMEODOMAIN PROTEIN 2"/>
    <property type="match status" value="1"/>
</dbReference>
<dbReference type="PANTHER" id="PTHR31948:SF60">
    <property type="entry name" value="ZINC-FINGER HOMEODOMAIN PROTEIN 5"/>
    <property type="match status" value="1"/>
</dbReference>
<dbReference type="Pfam" id="PF04770">
    <property type="entry name" value="ZF-HD_dimer"/>
    <property type="match status" value="1"/>
</dbReference>
<dbReference type="SUPFAM" id="SSF46689">
    <property type="entry name" value="Homeodomain-like"/>
    <property type="match status" value="1"/>
</dbReference>
<dbReference type="PROSITE" id="PS51523">
    <property type="entry name" value="ZF_HD_DIMER"/>
    <property type="match status" value="1"/>
</dbReference>
<protein>
    <recommendedName>
        <fullName>Zinc-finger homeodomain protein 5</fullName>
        <shortName>AtZHD5</shortName>
    </recommendedName>
    <alternativeName>
        <fullName>Homeobox protein 33</fullName>
        <shortName>AtHB-33</shortName>
    </alternativeName>
</protein>
<feature type="chain" id="PRO_0000426019" description="Zinc-finger homeodomain protein 5">
    <location>
        <begin position="1"/>
        <end position="309"/>
    </location>
</feature>
<feature type="zinc finger region" description="ZF-HD dimerization-type; degenerate" evidence="1">
    <location>
        <begin position="76"/>
        <end position="125"/>
    </location>
</feature>
<feature type="DNA-binding region" description="Homeobox">
    <location>
        <begin position="240"/>
        <end position="303"/>
    </location>
</feature>
<feature type="region of interest" description="Disordered" evidence="2">
    <location>
        <begin position="1"/>
        <end position="21"/>
    </location>
</feature>
<feature type="compositionally biased region" description="Basic and acidic residues" evidence="2">
    <location>
        <begin position="1"/>
        <end position="16"/>
    </location>
</feature>
<feature type="site" description="Required for DNA-binding">
    <location>
        <position position="292"/>
    </location>
</feature>
<feature type="mutagenesis site" description="Impaired DNA-binding." evidence="3">
    <original>M</original>
    <variation>A</variation>
    <variation>F</variation>
    <location>
        <position position="292"/>
    </location>
</feature>